<sequence length="614" mass="68714">MAAEVPAVSTPLSPLVQVPQEEDEQAEVTTMILEDDAWVQEAVLQEDGPESEPFPQSAGKGSPQEEDAAEGPQGALVRFRELCRRWLRPEVHTKEQMLTVLPREIQAWLQEHRPESSEEAVALVEDLTQTFRHSDFEIQSENGENSNEDMFEGVESHGMFLNISGGEGGQQSDGDSDFERDCGSGGAQGHAPGEDPRVVPSEGREVGQLIGLQGTYLGEKPYECPQCGKTFSRKSHLITHERTHTGEKYYKCDECGKSFSDGSNFSRHQTTHTGEKPYKCRDCGKSFSRSANLITHQRIHTGEKPFQCAECGKSFSRSPNLIAHQRTHTGEKPYSCPECGKSFGNRSSLNTHQGIHTGEKPYACKECGESFSYNSNLIRHQRIHTGEKPYKCTECGQKFSQSSALITHRRTHTGEKPYQCGECGKNFSRSSNLATHRRTHLVEKPYKCGLCGKSFSQSSSLIAHQGTHTGEKPYECLTCGESFSWSSNLIKHQRTHTGEKPYRCGDCGKGFSQRSQLVVHQRTHTGEKPYKCLMCGKSFSRGSILVMHQRAHLGDKPYRCPECGKGFSWNSVLIIHQRIHTGEKPYRCPECGKGFSNSSNFITHQRTHLKEKLY</sequence>
<gene>
    <name type="primary">Zscan2</name>
    <name type="synonym">Zfp-29</name>
    <name type="synonym">Zfp29</name>
</gene>
<protein>
    <recommendedName>
        <fullName>Zinc finger and SCAN domain-containing protein 2</fullName>
    </recommendedName>
    <alternativeName>
        <fullName>Zinc finger protein 29</fullName>
        <shortName>Zfp-29</shortName>
    </alternativeName>
</protein>
<evidence type="ECO:0000255" key="1">
    <source>
        <dbReference type="PROSITE-ProRule" id="PRU00042"/>
    </source>
</evidence>
<evidence type="ECO:0000255" key="2">
    <source>
        <dbReference type="PROSITE-ProRule" id="PRU00187"/>
    </source>
</evidence>
<evidence type="ECO:0000256" key="3">
    <source>
        <dbReference type="SAM" id="MobiDB-lite"/>
    </source>
</evidence>
<evidence type="ECO:0000269" key="4">
    <source>
    </source>
</evidence>
<evidence type="ECO:0000305" key="5"/>
<evidence type="ECO:0007829" key="6">
    <source>
        <dbReference type="PDB" id="2I13"/>
    </source>
</evidence>
<organism>
    <name type="scientific">Mus musculus</name>
    <name type="common">Mouse</name>
    <dbReference type="NCBI Taxonomy" id="10090"/>
    <lineage>
        <taxon>Eukaryota</taxon>
        <taxon>Metazoa</taxon>
        <taxon>Chordata</taxon>
        <taxon>Craniata</taxon>
        <taxon>Vertebrata</taxon>
        <taxon>Euteleostomi</taxon>
        <taxon>Mammalia</taxon>
        <taxon>Eutheria</taxon>
        <taxon>Euarchontoglires</taxon>
        <taxon>Glires</taxon>
        <taxon>Rodentia</taxon>
        <taxon>Myomorpha</taxon>
        <taxon>Muroidea</taxon>
        <taxon>Muridae</taxon>
        <taxon>Murinae</taxon>
        <taxon>Mus</taxon>
        <taxon>Mus</taxon>
    </lineage>
</organism>
<keyword id="KW-0002">3D-structure</keyword>
<keyword id="KW-0217">Developmental protein</keyword>
<keyword id="KW-0221">Differentiation</keyword>
<keyword id="KW-0238">DNA-binding</keyword>
<keyword id="KW-0479">Metal-binding</keyword>
<keyword id="KW-0539">Nucleus</keyword>
<keyword id="KW-1185">Reference proteome</keyword>
<keyword id="KW-0677">Repeat</keyword>
<keyword id="KW-0744">Spermatogenesis</keyword>
<keyword id="KW-0804">Transcription</keyword>
<keyword id="KW-0805">Transcription regulation</keyword>
<keyword id="KW-0862">Zinc</keyword>
<keyword id="KW-0863">Zinc-finger</keyword>
<proteinExistence type="evidence at protein level"/>
<reference key="1">
    <citation type="journal article" date="1991" name="Gene">
        <title>A zinc finger protein-encoding gene expressed in the post-meiotic phase of spermatogenesis.</title>
        <authorList>
            <person name="Denny P."/>
            <person name="Ashworth A."/>
        </authorList>
    </citation>
    <scope>NUCLEOTIDE SEQUENCE [MRNA]</scope>
    <scope>FUNCTION</scope>
    <scope>SUBCELLULAR LOCATION</scope>
    <scope>TISSUE SPECIFICITY</scope>
    <source>
        <tissue>Testis</tissue>
    </source>
</reference>
<reference key="2">
    <citation type="journal article" date="2004" name="Genome Res.">
        <title>The status, quality, and expansion of the NIH full-length cDNA project: the Mammalian Gene Collection (MGC).</title>
        <authorList>
            <consortium name="The MGC Project Team"/>
        </authorList>
    </citation>
    <scope>NUCLEOTIDE SEQUENCE [LARGE SCALE MRNA]</scope>
    <source>
        <tissue>Olfactory epithelium</tissue>
    </source>
</reference>
<dbReference type="EMBL" id="X55126">
    <property type="protein sequence ID" value="CAA38920.1"/>
    <property type="molecule type" value="mRNA"/>
</dbReference>
<dbReference type="EMBL" id="BC046961">
    <property type="protein sequence ID" value="AAH46961.1"/>
    <property type="molecule type" value="mRNA"/>
</dbReference>
<dbReference type="CCDS" id="CCDS21399.1"/>
<dbReference type="PIR" id="JH0500">
    <property type="entry name" value="JH0500"/>
</dbReference>
<dbReference type="RefSeq" id="NP_001369440.1">
    <property type="nucleotide sequence ID" value="NM_001382511.1"/>
</dbReference>
<dbReference type="RefSeq" id="NP_001369441.1">
    <property type="nucleotide sequence ID" value="NM_001382512.1"/>
</dbReference>
<dbReference type="RefSeq" id="NP_001369443.1">
    <property type="nucleotide sequence ID" value="NM_001382514.1"/>
</dbReference>
<dbReference type="RefSeq" id="NP_001369444.1">
    <property type="nucleotide sequence ID" value="NM_001382515.1"/>
</dbReference>
<dbReference type="RefSeq" id="NP_033579.1">
    <property type="nucleotide sequence ID" value="NM_009553.2"/>
</dbReference>
<dbReference type="RefSeq" id="XP_006540868.1">
    <property type="nucleotide sequence ID" value="XM_006540805.3"/>
</dbReference>
<dbReference type="RefSeq" id="XP_006540869.1">
    <property type="nucleotide sequence ID" value="XM_006540806.3"/>
</dbReference>
<dbReference type="RefSeq" id="XP_006540870.1">
    <property type="nucleotide sequence ID" value="XM_006540807.3"/>
</dbReference>
<dbReference type="RefSeq" id="XP_006540871.1">
    <property type="nucleotide sequence ID" value="XM_006540808.5"/>
</dbReference>
<dbReference type="RefSeq" id="XP_006540872.1">
    <property type="nucleotide sequence ID" value="XM_006540809.3"/>
</dbReference>
<dbReference type="RefSeq" id="XP_006540873.1">
    <property type="nucleotide sequence ID" value="XM_006540810.5"/>
</dbReference>
<dbReference type="RefSeq" id="XP_006540874.1">
    <property type="nucleotide sequence ID" value="XM_006540811.4"/>
</dbReference>
<dbReference type="RefSeq" id="XP_006540875.1">
    <property type="nucleotide sequence ID" value="XM_006540812.5"/>
</dbReference>
<dbReference type="PDB" id="2I13">
    <property type="method" value="X-ray"/>
    <property type="resolution" value="1.96 A"/>
    <property type="chains" value="A/B=218-388"/>
</dbReference>
<dbReference type="PDBsum" id="2I13"/>
<dbReference type="SMR" id="Q07230"/>
<dbReference type="BioGRID" id="204655">
    <property type="interactions" value="4"/>
</dbReference>
<dbReference type="FunCoup" id="Q07230">
    <property type="interactions" value="565"/>
</dbReference>
<dbReference type="IntAct" id="Q07230">
    <property type="interactions" value="4"/>
</dbReference>
<dbReference type="STRING" id="10090.ENSMUSP00000042321"/>
<dbReference type="iPTMnet" id="Q07230"/>
<dbReference type="PhosphoSitePlus" id="Q07230"/>
<dbReference type="SwissPalm" id="Q07230"/>
<dbReference type="PaxDb" id="10090-ENSMUSP00000042321"/>
<dbReference type="ProteomicsDB" id="275107"/>
<dbReference type="Antibodypedia" id="1841">
    <property type="antibodies" value="137 antibodies from 24 providers"/>
</dbReference>
<dbReference type="DNASU" id="22691"/>
<dbReference type="Ensembl" id="ENSMUST00000044115.9">
    <property type="protein sequence ID" value="ENSMUSP00000042321.8"/>
    <property type="gene ID" value="ENSMUSG00000038797.14"/>
</dbReference>
<dbReference type="GeneID" id="22691"/>
<dbReference type="KEGG" id="mmu:22691"/>
<dbReference type="UCSC" id="uc009ibh.1">
    <property type="organism name" value="mouse"/>
</dbReference>
<dbReference type="AGR" id="MGI:99176"/>
<dbReference type="CTD" id="54993"/>
<dbReference type="MGI" id="MGI:99176">
    <property type="gene designation" value="Zscan2"/>
</dbReference>
<dbReference type="VEuPathDB" id="HostDB:ENSMUSG00000038797"/>
<dbReference type="eggNOG" id="KOG1721">
    <property type="taxonomic scope" value="Eukaryota"/>
</dbReference>
<dbReference type="GeneTree" id="ENSGT00940000161710"/>
<dbReference type="HOGENOM" id="CLU_002678_57_1_1"/>
<dbReference type="InParanoid" id="Q07230"/>
<dbReference type="OMA" id="ILLMHQR"/>
<dbReference type="OrthoDB" id="1095242at2759"/>
<dbReference type="PhylomeDB" id="Q07230"/>
<dbReference type="TreeFam" id="TF337913"/>
<dbReference type="BioGRID-ORCS" id="22691">
    <property type="hits" value="3 hits in 77 CRISPR screens"/>
</dbReference>
<dbReference type="EvolutionaryTrace" id="Q07230"/>
<dbReference type="PRO" id="PR:Q07230"/>
<dbReference type="Proteomes" id="UP000000589">
    <property type="component" value="Chromosome 7"/>
</dbReference>
<dbReference type="RNAct" id="Q07230">
    <property type="molecule type" value="protein"/>
</dbReference>
<dbReference type="Bgee" id="ENSMUSG00000038797">
    <property type="expression patterns" value="Expressed in spermatid and 72 other cell types or tissues"/>
</dbReference>
<dbReference type="ExpressionAtlas" id="Q07230">
    <property type="expression patterns" value="baseline and differential"/>
</dbReference>
<dbReference type="GO" id="GO:0005634">
    <property type="term" value="C:nucleus"/>
    <property type="evidence" value="ECO:0007669"/>
    <property type="project" value="UniProtKB-SubCell"/>
</dbReference>
<dbReference type="GO" id="GO:0000981">
    <property type="term" value="F:DNA-binding transcription factor activity, RNA polymerase II-specific"/>
    <property type="evidence" value="ECO:0007669"/>
    <property type="project" value="UniProtKB-ARBA"/>
</dbReference>
<dbReference type="GO" id="GO:0000976">
    <property type="term" value="F:transcription cis-regulatory region binding"/>
    <property type="evidence" value="ECO:0007669"/>
    <property type="project" value="UniProtKB-ARBA"/>
</dbReference>
<dbReference type="GO" id="GO:0008270">
    <property type="term" value="F:zinc ion binding"/>
    <property type="evidence" value="ECO:0007669"/>
    <property type="project" value="UniProtKB-KW"/>
</dbReference>
<dbReference type="GO" id="GO:0030154">
    <property type="term" value="P:cell differentiation"/>
    <property type="evidence" value="ECO:0007669"/>
    <property type="project" value="UniProtKB-KW"/>
</dbReference>
<dbReference type="GO" id="GO:0045944">
    <property type="term" value="P:positive regulation of transcription by RNA polymerase II"/>
    <property type="evidence" value="ECO:0007669"/>
    <property type="project" value="UniProtKB-ARBA"/>
</dbReference>
<dbReference type="GO" id="GO:0007283">
    <property type="term" value="P:spermatogenesis"/>
    <property type="evidence" value="ECO:0007669"/>
    <property type="project" value="UniProtKB-KW"/>
</dbReference>
<dbReference type="CDD" id="cd07936">
    <property type="entry name" value="SCAN"/>
    <property type="match status" value="1"/>
</dbReference>
<dbReference type="FunFam" id="3.30.160.60:FF:003288">
    <property type="entry name" value="Uncharacterized protein"/>
    <property type="match status" value="1"/>
</dbReference>
<dbReference type="FunFam" id="3.30.160.60:FF:000088">
    <property type="entry name" value="Zinc finger and SCAN domain containing 2"/>
    <property type="match status" value="4"/>
</dbReference>
<dbReference type="FunFam" id="3.30.160.60:FF:000056">
    <property type="entry name" value="Zinc finger and SCAN domain-containing 20"/>
    <property type="match status" value="1"/>
</dbReference>
<dbReference type="FunFam" id="3.30.160.60:FF:003000">
    <property type="entry name" value="Zinc finger and SCAN domain-containing 20"/>
    <property type="match status" value="1"/>
</dbReference>
<dbReference type="FunFam" id="1.10.4020.10:FF:000002">
    <property type="entry name" value="zinc finger and SCAN domain-containing protein 2"/>
    <property type="match status" value="1"/>
</dbReference>
<dbReference type="FunFam" id="3.30.160.60:FF:000725">
    <property type="entry name" value="zinc finger protein 205 isoform X1"/>
    <property type="match status" value="2"/>
</dbReference>
<dbReference type="FunFam" id="3.30.160.60:FF:002343">
    <property type="entry name" value="Zinc finger protein 33A"/>
    <property type="match status" value="1"/>
</dbReference>
<dbReference type="FunFam" id="3.30.160.60:FF:002090">
    <property type="entry name" value="Zinc finger protein 473"/>
    <property type="match status" value="1"/>
</dbReference>
<dbReference type="FunFam" id="3.30.160.60:FF:000990">
    <property type="entry name" value="zinc finger protein 629 isoform X2"/>
    <property type="match status" value="2"/>
</dbReference>
<dbReference type="FunFam" id="3.30.160.60:FF:000912">
    <property type="entry name" value="Zinc finger protein 660"/>
    <property type="match status" value="1"/>
</dbReference>
<dbReference type="Gene3D" id="3.30.160.60">
    <property type="entry name" value="Classic Zinc Finger"/>
    <property type="match status" value="14"/>
</dbReference>
<dbReference type="Gene3D" id="1.10.4020.10">
    <property type="entry name" value="DNA breaking-rejoining enzymes"/>
    <property type="match status" value="1"/>
</dbReference>
<dbReference type="InterPro" id="IPR050329">
    <property type="entry name" value="GLI_C2H2-zinc-finger"/>
</dbReference>
<dbReference type="InterPro" id="IPR003309">
    <property type="entry name" value="SCAN_dom"/>
</dbReference>
<dbReference type="InterPro" id="IPR038269">
    <property type="entry name" value="SCAN_sf"/>
</dbReference>
<dbReference type="InterPro" id="IPR036236">
    <property type="entry name" value="Znf_C2H2_sf"/>
</dbReference>
<dbReference type="InterPro" id="IPR013087">
    <property type="entry name" value="Znf_C2H2_type"/>
</dbReference>
<dbReference type="PANTHER" id="PTHR19818:SF157">
    <property type="entry name" value="C2H2-TYPE DOMAIN-CONTAINING PROTEIN"/>
    <property type="match status" value="1"/>
</dbReference>
<dbReference type="PANTHER" id="PTHR19818">
    <property type="entry name" value="ZINC FINGER PROTEIN ZIC AND GLI"/>
    <property type="match status" value="1"/>
</dbReference>
<dbReference type="Pfam" id="PF02023">
    <property type="entry name" value="SCAN"/>
    <property type="match status" value="1"/>
</dbReference>
<dbReference type="Pfam" id="PF00096">
    <property type="entry name" value="zf-C2H2"/>
    <property type="match status" value="14"/>
</dbReference>
<dbReference type="SMART" id="SM00431">
    <property type="entry name" value="SCAN"/>
    <property type="match status" value="1"/>
</dbReference>
<dbReference type="SMART" id="SM00355">
    <property type="entry name" value="ZnF_C2H2"/>
    <property type="match status" value="14"/>
</dbReference>
<dbReference type="SUPFAM" id="SSF57667">
    <property type="entry name" value="beta-beta-alpha zinc fingers"/>
    <property type="match status" value="9"/>
</dbReference>
<dbReference type="SUPFAM" id="SSF47353">
    <property type="entry name" value="Retrovirus capsid dimerization domain-like"/>
    <property type="match status" value="1"/>
</dbReference>
<dbReference type="PROSITE" id="PS50804">
    <property type="entry name" value="SCAN_BOX"/>
    <property type="match status" value="1"/>
</dbReference>
<dbReference type="PROSITE" id="PS00028">
    <property type="entry name" value="ZINC_FINGER_C2H2_1"/>
    <property type="match status" value="14"/>
</dbReference>
<dbReference type="PROSITE" id="PS50157">
    <property type="entry name" value="ZINC_FINGER_C2H2_2"/>
    <property type="match status" value="14"/>
</dbReference>
<name>ZSCA2_MOUSE</name>
<accession>Q07230</accession>
<comment type="function">
    <text evidence="4">May be involved in transcriptional regulation during the post-meiotic stages of spermatogenesis.</text>
</comment>
<comment type="subcellular location">
    <subcellularLocation>
        <location evidence="2 4">Nucleus</location>
    </subcellularLocation>
</comment>
<comment type="tissue specificity">
    <text evidence="4">In the adult, predominantly found in spermatids. Also present in the embryo.</text>
</comment>
<comment type="similarity">
    <text evidence="5">Belongs to the krueppel C2H2-type zinc-finger protein family.</text>
</comment>
<feature type="chain" id="PRO_0000047750" description="Zinc finger and SCAN domain-containing protein 2">
    <location>
        <begin position="1"/>
        <end position="614"/>
    </location>
</feature>
<feature type="domain" description="SCAN box" evidence="2">
    <location>
        <begin position="69"/>
        <end position="127"/>
    </location>
</feature>
<feature type="zinc finger region" description="C2H2-type 1" evidence="1">
    <location>
        <begin position="222"/>
        <end position="244"/>
    </location>
</feature>
<feature type="zinc finger region" description="C2H2-type 2" evidence="1">
    <location>
        <begin position="250"/>
        <end position="272"/>
    </location>
</feature>
<feature type="zinc finger region" description="C2H2-type 3" evidence="1">
    <location>
        <begin position="278"/>
        <end position="300"/>
    </location>
</feature>
<feature type="zinc finger region" description="C2H2-type 4" evidence="1">
    <location>
        <begin position="306"/>
        <end position="328"/>
    </location>
</feature>
<feature type="zinc finger region" description="C2H2-type 5" evidence="1">
    <location>
        <begin position="334"/>
        <end position="356"/>
    </location>
</feature>
<feature type="zinc finger region" description="C2H2-type 6" evidence="1">
    <location>
        <begin position="362"/>
        <end position="384"/>
    </location>
</feature>
<feature type="zinc finger region" description="C2H2-type 7" evidence="1">
    <location>
        <begin position="390"/>
        <end position="412"/>
    </location>
</feature>
<feature type="zinc finger region" description="C2H2-type 8" evidence="1">
    <location>
        <begin position="418"/>
        <end position="440"/>
    </location>
</feature>
<feature type="zinc finger region" description="C2H2-type 9" evidence="1">
    <location>
        <begin position="446"/>
        <end position="468"/>
    </location>
</feature>
<feature type="zinc finger region" description="C2H2-type 10" evidence="1">
    <location>
        <begin position="474"/>
        <end position="496"/>
    </location>
</feature>
<feature type="zinc finger region" description="C2H2-type 11" evidence="1">
    <location>
        <begin position="502"/>
        <end position="524"/>
    </location>
</feature>
<feature type="zinc finger region" description="C2H2-type 12" evidence="1">
    <location>
        <begin position="530"/>
        <end position="552"/>
    </location>
</feature>
<feature type="zinc finger region" description="C2H2-type 13" evidence="1">
    <location>
        <begin position="558"/>
        <end position="580"/>
    </location>
</feature>
<feature type="zinc finger region" description="C2H2-type 14" evidence="1">
    <location>
        <begin position="586"/>
        <end position="608"/>
    </location>
</feature>
<feature type="region of interest" description="Disordered" evidence="3">
    <location>
        <begin position="1"/>
        <end position="25"/>
    </location>
</feature>
<feature type="region of interest" description="Disordered" evidence="3">
    <location>
        <begin position="42"/>
        <end position="73"/>
    </location>
</feature>
<feature type="region of interest" description="Disordered" evidence="3">
    <location>
        <begin position="162"/>
        <end position="200"/>
    </location>
</feature>
<feature type="turn" evidence="6">
    <location>
        <begin position="225"/>
        <end position="227"/>
    </location>
</feature>
<feature type="helix" evidence="6">
    <location>
        <begin position="235"/>
        <end position="239"/>
    </location>
</feature>
<feature type="helix" evidence="6">
    <location>
        <begin position="240"/>
        <end position="242"/>
    </location>
</feature>
<feature type="turn" evidence="6">
    <location>
        <begin position="253"/>
        <end position="255"/>
    </location>
</feature>
<feature type="strand" evidence="6">
    <location>
        <begin position="258"/>
        <end position="261"/>
    </location>
</feature>
<feature type="helix" evidence="6">
    <location>
        <begin position="262"/>
        <end position="273"/>
    </location>
</feature>
<feature type="turn" evidence="6">
    <location>
        <begin position="281"/>
        <end position="283"/>
    </location>
</feature>
<feature type="strand" evidence="6">
    <location>
        <begin position="286"/>
        <end position="288"/>
    </location>
</feature>
<feature type="helix" evidence="6">
    <location>
        <begin position="290"/>
        <end position="301"/>
    </location>
</feature>
<feature type="turn" evidence="6">
    <location>
        <begin position="309"/>
        <end position="311"/>
    </location>
</feature>
<feature type="strand" evidence="6">
    <location>
        <begin position="314"/>
        <end position="317"/>
    </location>
</feature>
<feature type="helix" evidence="6">
    <location>
        <begin position="318"/>
        <end position="329"/>
    </location>
</feature>
<feature type="turn" evidence="6">
    <location>
        <begin position="337"/>
        <end position="339"/>
    </location>
</feature>
<feature type="strand" evidence="6">
    <location>
        <begin position="342"/>
        <end position="344"/>
    </location>
</feature>
<feature type="helix" evidence="6">
    <location>
        <begin position="346"/>
        <end position="357"/>
    </location>
</feature>
<feature type="turn" evidence="6">
    <location>
        <begin position="365"/>
        <end position="367"/>
    </location>
</feature>
<feature type="strand" evidence="6">
    <location>
        <begin position="370"/>
        <end position="373"/>
    </location>
</feature>
<feature type="helix" evidence="6">
    <location>
        <begin position="374"/>
        <end position="381"/>
    </location>
</feature>